<proteinExistence type="inferred from homology"/>
<comment type="function">
    <text evidence="1">Molecular chaperone. Has ATPase activity.</text>
</comment>
<comment type="subunit">
    <text evidence="1">Homodimer.</text>
</comment>
<comment type="subcellular location">
    <subcellularLocation>
        <location evidence="1">Cytoplasm</location>
    </subcellularLocation>
</comment>
<comment type="similarity">
    <text evidence="1">Belongs to the heat shock protein 90 family.</text>
</comment>
<feature type="chain" id="PRO_1000081514" description="Chaperone protein HtpG">
    <location>
        <begin position="1"/>
        <end position="633"/>
    </location>
</feature>
<feature type="region of interest" description="A; substrate-binding" evidence="1">
    <location>
        <begin position="1"/>
        <end position="344"/>
    </location>
</feature>
<feature type="region of interest" description="B" evidence="1">
    <location>
        <begin position="345"/>
        <end position="560"/>
    </location>
</feature>
<feature type="region of interest" description="C" evidence="1">
    <location>
        <begin position="561"/>
        <end position="633"/>
    </location>
</feature>
<gene>
    <name evidence="1" type="primary">htpG</name>
    <name type="ordered locus">COXBURSA331_A0416</name>
</gene>
<protein>
    <recommendedName>
        <fullName evidence="1">Chaperone protein HtpG</fullName>
    </recommendedName>
    <alternativeName>
        <fullName evidence="1">Heat shock protein HtpG</fullName>
    </alternativeName>
    <alternativeName>
        <fullName evidence="1">High temperature protein G</fullName>
    </alternativeName>
</protein>
<name>HTPG_COXBR</name>
<sequence length="633" mass="72764">MSLQPQAETLSFEAEVKQLLHLVAHSLYSNKEIFLRELISNSSDAADKLRYQALSDAALYENDADLKIWIDFDKDNRTITIRDNGIGMSREEVIENLGTIAKSGTRAFRELLAEKKAEDSQLIGQFGVGFYSAFIVADRVVVRTRRAGMKADQGVEWESTGEGEYTLKNIDKPTRGTEVVLHLKESEEEFLDSLRLRAIITKYSDHILLPIVMKKIKTSGADDEDKNETPEEEVVNRANALWVLPKDKIKDEEYKELYKHIAHDFEDPLAWVHNKVEGKLEYTTLLYIPARAPFDLWNREGQRGLKLYVKRIFIMDDAEHFMPMYLRFVKGIVDSNDLPLNISRELLQSNEVINKIKAGCVKRILSLLEDLAKNDKEKYASFWKAFGQVLKEGPAEDFANRDRIANLLRFASTHNDTDEQNVSLQDYISRMKPEQNKIYYIVADTYTSAKNSPLLEVFRKKDIEVLLMSDRVDEWLVAHLNEFEGKSLQSIAKGTLDLGDLEKEEKVETEKFEKDFDELLKQFKEVLGEKIKDVRITHRLTDSPTCVVFDENEMSGHLQRLLIQTGQDFMQAKPILEINPSHPLILRVKNESDKTRFNRWADLLLNQALLAEGEQLKDPASFVKGLNELLLDS</sequence>
<accession>A9NB44</accession>
<organism>
    <name type="scientific">Coxiella burnetii (strain RSA 331 / Henzerling II)</name>
    <dbReference type="NCBI Taxonomy" id="360115"/>
    <lineage>
        <taxon>Bacteria</taxon>
        <taxon>Pseudomonadati</taxon>
        <taxon>Pseudomonadota</taxon>
        <taxon>Gammaproteobacteria</taxon>
        <taxon>Legionellales</taxon>
        <taxon>Coxiellaceae</taxon>
        <taxon>Coxiella</taxon>
    </lineage>
</organism>
<reference key="1">
    <citation type="submission" date="2007-11" db="EMBL/GenBank/DDBJ databases">
        <title>Genome sequencing of phylogenetically and phenotypically diverse Coxiella burnetii isolates.</title>
        <authorList>
            <person name="Seshadri R."/>
            <person name="Samuel J.E."/>
        </authorList>
    </citation>
    <scope>NUCLEOTIDE SEQUENCE [LARGE SCALE GENOMIC DNA]</scope>
    <source>
        <strain>RSA 331 / Henzerling II</strain>
    </source>
</reference>
<keyword id="KW-0067">ATP-binding</keyword>
<keyword id="KW-0143">Chaperone</keyword>
<keyword id="KW-0963">Cytoplasm</keyword>
<keyword id="KW-0547">Nucleotide-binding</keyword>
<keyword id="KW-0346">Stress response</keyword>
<dbReference type="EMBL" id="CP000890">
    <property type="protein sequence ID" value="ABX78007.1"/>
    <property type="molecule type" value="Genomic_DNA"/>
</dbReference>
<dbReference type="RefSeq" id="WP_012220162.1">
    <property type="nucleotide sequence ID" value="NC_010117.1"/>
</dbReference>
<dbReference type="SMR" id="A9NB44"/>
<dbReference type="KEGG" id="cbs:COXBURSA331_A0416"/>
<dbReference type="HOGENOM" id="CLU_006684_3_0_6"/>
<dbReference type="GO" id="GO:0005737">
    <property type="term" value="C:cytoplasm"/>
    <property type="evidence" value="ECO:0007669"/>
    <property type="project" value="UniProtKB-SubCell"/>
</dbReference>
<dbReference type="GO" id="GO:0005524">
    <property type="term" value="F:ATP binding"/>
    <property type="evidence" value="ECO:0007669"/>
    <property type="project" value="UniProtKB-UniRule"/>
</dbReference>
<dbReference type="GO" id="GO:0016887">
    <property type="term" value="F:ATP hydrolysis activity"/>
    <property type="evidence" value="ECO:0007669"/>
    <property type="project" value="InterPro"/>
</dbReference>
<dbReference type="GO" id="GO:0140662">
    <property type="term" value="F:ATP-dependent protein folding chaperone"/>
    <property type="evidence" value="ECO:0007669"/>
    <property type="project" value="InterPro"/>
</dbReference>
<dbReference type="GO" id="GO:0051082">
    <property type="term" value="F:unfolded protein binding"/>
    <property type="evidence" value="ECO:0007669"/>
    <property type="project" value="UniProtKB-UniRule"/>
</dbReference>
<dbReference type="CDD" id="cd16927">
    <property type="entry name" value="HATPase_Hsp90-like"/>
    <property type="match status" value="1"/>
</dbReference>
<dbReference type="FunFam" id="1.20.120.790:FF:000006">
    <property type="entry name" value="Chaperone protein HtpG"/>
    <property type="match status" value="1"/>
</dbReference>
<dbReference type="FunFam" id="3.40.50.11260:FF:000005">
    <property type="entry name" value="Heat shock protein 90"/>
    <property type="match status" value="1"/>
</dbReference>
<dbReference type="FunFam" id="3.30.230.80:FF:000002">
    <property type="entry name" value="Molecular chaperone HtpG"/>
    <property type="match status" value="1"/>
</dbReference>
<dbReference type="FunFam" id="3.30.565.10:FF:000009">
    <property type="entry name" value="Molecular chaperone HtpG"/>
    <property type="match status" value="1"/>
</dbReference>
<dbReference type="Gene3D" id="3.30.230.80">
    <property type="match status" value="1"/>
</dbReference>
<dbReference type="Gene3D" id="3.40.50.11260">
    <property type="match status" value="1"/>
</dbReference>
<dbReference type="Gene3D" id="1.20.120.790">
    <property type="entry name" value="Heat shock protein 90, C-terminal domain"/>
    <property type="match status" value="1"/>
</dbReference>
<dbReference type="Gene3D" id="3.30.565.10">
    <property type="entry name" value="Histidine kinase-like ATPase, C-terminal domain"/>
    <property type="match status" value="1"/>
</dbReference>
<dbReference type="HAMAP" id="MF_00505">
    <property type="entry name" value="HSP90"/>
    <property type="match status" value="1"/>
</dbReference>
<dbReference type="InterPro" id="IPR036890">
    <property type="entry name" value="HATPase_C_sf"/>
</dbReference>
<dbReference type="InterPro" id="IPR019805">
    <property type="entry name" value="Heat_shock_protein_90_CS"/>
</dbReference>
<dbReference type="InterPro" id="IPR037196">
    <property type="entry name" value="HSP90_C"/>
</dbReference>
<dbReference type="InterPro" id="IPR001404">
    <property type="entry name" value="Hsp90_fam"/>
</dbReference>
<dbReference type="InterPro" id="IPR020575">
    <property type="entry name" value="Hsp90_N"/>
</dbReference>
<dbReference type="InterPro" id="IPR020568">
    <property type="entry name" value="Ribosomal_Su5_D2-typ_SF"/>
</dbReference>
<dbReference type="NCBIfam" id="NF003555">
    <property type="entry name" value="PRK05218.1"/>
    <property type="match status" value="1"/>
</dbReference>
<dbReference type="PANTHER" id="PTHR11528">
    <property type="entry name" value="HEAT SHOCK PROTEIN 90 FAMILY MEMBER"/>
    <property type="match status" value="1"/>
</dbReference>
<dbReference type="Pfam" id="PF13589">
    <property type="entry name" value="HATPase_c_3"/>
    <property type="match status" value="1"/>
</dbReference>
<dbReference type="Pfam" id="PF00183">
    <property type="entry name" value="HSP90"/>
    <property type="match status" value="1"/>
</dbReference>
<dbReference type="PIRSF" id="PIRSF002583">
    <property type="entry name" value="Hsp90"/>
    <property type="match status" value="1"/>
</dbReference>
<dbReference type="PRINTS" id="PR00775">
    <property type="entry name" value="HEATSHOCK90"/>
</dbReference>
<dbReference type="SMART" id="SM00387">
    <property type="entry name" value="HATPase_c"/>
    <property type="match status" value="1"/>
</dbReference>
<dbReference type="SUPFAM" id="SSF55874">
    <property type="entry name" value="ATPase domain of HSP90 chaperone/DNA topoisomerase II/histidine kinase"/>
    <property type="match status" value="1"/>
</dbReference>
<dbReference type="SUPFAM" id="SSF110942">
    <property type="entry name" value="HSP90 C-terminal domain"/>
    <property type="match status" value="1"/>
</dbReference>
<dbReference type="SUPFAM" id="SSF54211">
    <property type="entry name" value="Ribosomal protein S5 domain 2-like"/>
    <property type="match status" value="1"/>
</dbReference>
<dbReference type="PROSITE" id="PS00298">
    <property type="entry name" value="HSP90"/>
    <property type="match status" value="1"/>
</dbReference>
<evidence type="ECO:0000255" key="1">
    <source>
        <dbReference type="HAMAP-Rule" id="MF_00505"/>
    </source>
</evidence>